<protein>
    <recommendedName>
        <fullName>DNA-directed RNA polymerase II subunit RPB7</fullName>
        <shortName>RNA polymerase II subunit B7</shortName>
    </recommendedName>
    <alternativeName>
        <fullName>DNA-directed RNA polymerase II subunit G</fullName>
    </alternativeName>
</protein>
<reference key="1">
    <citation type="journal article" date="2005" name="Science">
        <title>The transcriptional landscape of the mammalian genome.</title>
        <authorList>
            <person name="Carninci P."/>
            <person name="Kasukawa T."/>
            <person name="Katayama S."/>
            <person name="Gough J."/>
            <person name="Frith M.C."/>
            <person name="Maeda N."/>
            <person name="Oyama R."/>
            <person name="Ravasi T."/>
            <person name="Lenhard B."/>
            <person name="Wells C."/>
            <person name="Kodzius R."/>
            <person name="Shimokawa K."/>
            <person name="Bajic V.B."/>
            <person name="Brenner S.E."/>
            <person name="Batalov S."/>
            <person name="Forrest A.R."/>
            <person name="Zavolan M."/>
            <person name="Davis M.J."/>
            <person name="Wilming L.G."/>
            <person name="Aidinis V."/>
            <person name="Allen J.E."/>
            <person name="Ambesi-Impiombato A."/>
            <person name="Apweiler R."/>
            <person name="Aturaliya R.N."/>
            <person name="Bailey T.L."/>
            <person name="Bansal M."/>
            <person name="Baxter L."/>
            <person name="Beisel K.W."/>
            <person name="Bersano T."/>
            <person name="Bono H."/>
            <person name="Chalk A.M."/>
            <person name="Chiu K.P."/>
            <person name="Choudhary V."/>
            <person name="Christoffels A."/>
            <person name="Clutterbuck D.R."/>
            <person name="Crowe M.L."/>
            <person name="Dalla E."/>
            <person name="Dalrymple B.P."/>
            <person name="de Bono B."/>
            <person name="Della Gatta G."/>
            <person name="di Bernardo D."/>
            <person name="Down T."/>
            <person name="Engstrom P."/>
            <person name="Fagiolini M."/>
            <person name="Faulkner G."/>
            <person name="Fletcher C.F."/>
            <person name="Fukushima T."/>
            <person name="Furuno M."/>
            <person name="Futaki S."/>
            <person name="Gariboldi M."/>
            <person name="Georgii-Hemming P."/>
            <person name="Gingeras T.R."/>
            <person name="Gojobori T."/>
            <person name="Green R.E."/>
            <person name="Gustincich S."/>
            <person name="Harbers M."/>
            <person name="Hayashi Y."/>
            <person name="Hensch T.K."/>
            <person name="Hirokawa N."/>
            <person name="Hill D."/>
            <person name="Huminiecki L."/>
            <person name="Iacono M."/>
            <person name="Ikeo K."/>
            <person name="Iwama A."/>
            <person name="Ishikawa T."/>
            <person name="Jakt M."/>
            <person name="Kanapin A."/>
            <person name="Katoh M."/>
            <person name="Kawasawa Y."/>
            <person name="Kelso J."/>
            <person name="Kitamura H."/>
            <person name="Kitano H."/>
            <person name="Kollias G."/>
            <person name="Krishnan S.P."/>
            <person name="Kruger A."/>
            <person name="Kummerfeld S.K."/>
            <person name="Kurochkin I.V."/>
            <person name="Lareau L.F."/>
            <person name="Lazarevic D."/>
            <person name="Lipovich L."/>
            <person name="Liu J."/>
            <person name="Liuni S."/>
            <person name="McWilliam S."/>
            <person name="Madan Babu M."/>
            <person name="Madera M."/>
            <person name="Marchionni L."/>
            <person name="Matsuda H."/>
            <person name="Matsuzawa S."/>
            <person name="Miki H."/>
            <person name="Mignone F."/>
            <person name="Miyake S."/>
            <person name="Morris K."/>
            <person name="Mottagui-Tabar S."/>
            <person name="Mulder N."/>
            <person name="Nakano N."/>
            <person name="Nakauchi H."/>
            <person name="Ng P."/>
            <person name="Nilsson R."/>
            <person name="Nishiguchi S."/>
            <person name="Nishikawa S."/>
            <person name="Nori F."/>
            <person name="Ohara O."/>
            <person name="Okazaki Y."/>
            <person name="Orlando V."/>
            <person name="Pang K.C."/>
            <person name="Pavan W.J."/>
            <person name="Pavesi G."/>
            <person name="Pesole G."/>
            <person name="Petrovsky N."/>
            <person name="Piazza S."/>
            <person name="Reed J."/>
            <person name="Reid J.F."/>
            <person name="Ring B.Z."/>
            <person name="Ringwald M."/>
            <person name="Rost B."/>
            <person name="Ruan Y."/>
            <person name="Salzberg S.L."/>
            <person name="Sandelin A."/>
            <person name="Schneider C."/>
            <person name="Schoenbach C."/>
            <person name="Sekiguchi K."/>
            <person name="Semple C.A."/>
            <person name="Seno S."/>
            <person name="Sessa L."/>
            <person name="Sheng Y."/>
            <person name="Shibata Y."/>
            <person name="Shimada H."/>
            <person name="Shimada K."/>
            <person name="Silva D."/>
            <person name="Sinclair B."/>
            <person name="Sperling S."/>
            <person name="Stupka E."/>
            <person name="Sugiura K."/>
            <person name="Sultana R."/>
            <person name="Takenaka Y."/>
            <person name="Taki K."/>
            <person name="Tammoja K."/>
            <person name="Tan S.L."/>
            <person name="Tang S."/>
            <person name="Taylor M.S."/>
            <person name="Tegner J."/>
            <person name="Teichmann S.A."/>
            <person name="Ueda H.R."/>
            <person name="van Nimwegen E."/>
            <person name="Verardo R."/>
            <person name="Wei C.L."/>
            <person name="Yagi K."/>
            <person name="Yamanishi H."/>
            <person name="Zabarovsky E."/>
            <person name="Zhu S."/>
            <person name="Zimmer A."/>
            <person name="Hide W."/>
            <person name="Bult C."/>
            <person name="Grimmond S.M."/>
            <person name="Teasdale R.D."/>
            <person name="Liu E.T."/>
            <person name="Brusic V."/>
            <person name="Quackenbush J."/>
            <person name="Wahlestedt C."/>
            <person name="Mattick J.S."/>
            <person name="Hume D.A."/>
            <person name="Kai C."/>
            <person name="Sasaki D."/>
            <person name="Tomaru Y."/>
            <person name="Fukuda S."/>
            <person name="Kanamori-Katayama M."/>
            <person name="Suzuki M."/>
            <person name="Aoki J."/>
            <person name="Arakawa T."/>
            <person name="Iida J."/>
            <person name="Imamura K."/>
            <person name="Itoh M."/>
            <person name="Kato T."/>
            <person name="Kawaji H."/>
            <person name="Kawagashira N."/>
            <person name="Kawashima T."/>
            <person name="Kojima M."/>
            <person name="Kondo S."/>
            <person name="Konno H."/>
            <person name="Nakano K."/>
            <person name="Ninomiya N."/>
            <person name="Nishio T."/>
            <person name="Okada M."/>
            <person name="Plessy C."/>
            <person name="Shibata K."/>
            <person name="Shiraki T."/>
            <person name="Suzuki S."/>
            <person name="Tagami M."/>
            <person name="Waki K."/>
            <person name="Watahiki A."/>
            <person name="Okamura-Oho Y."/>
            <person name="Suzuki H."/>
            <person name="Kawai J."/>
            <person name="Hayashizaki Y."/>
        </authorList>
    </citation>
    <scope>NUCLEOTIDE SEQUENCE [LARGE SCALE MRNA]</scope>
    <source>
        <strain>C57BL/6J</strain>
    </source>
</reference>
<reference key="2">
    <citation type="journal article" date="2004" name="Genome Res.">
        <title>The status, quality, and expansion of the NIH full-length cDNA project: the Mammalian Gene Collection (MGC).</title>
        <authorList>
            <consortium name="The MGC Project Team"/>
        </authorList>
    </citation>
    <scope>NUCLEOTIDE SEQUENCE [LARGE SCALE MRNA]</scope>
    <source>
        <strain>C57BL/6J</strain>
        <tissue>Brain</tissue>
    </source>
</reference>
<reference key="3">
    <citation type="journal article" date="2010" name="Cell">
        <title>A tissue-specific atlas of mouse protein phosphorylation and expression.</title>
        <authorList>
            <person name="Huttlin E.L."/>
            <person name="Jedrychowski M.P."/>
            <person name="Elias J.E."/>
            <person name="Goswami T."/>
            <person name="Rad R."/>
            <person name="Beausoleil S.A."/>
            <person name="Villen J."/>
            <person name="Haas W."/>
            <person name="Sowa M.E."/>
            <person name="Gygi S.P."/>
        </authorList>
    </citation>
    <scope>IDENTIFICATION BY MASS SPECTROMETRY [LARGE SCALE ANALYSIS]</scope>
    <source>
        <tissue>Brain</tissue>
        <tissue>Brown adipose tissue</tissue>
        <tissue>Heart</tissue>
        <tissue>Liver</tissue>
        <tissue>Spleen</tissue>
        <tissue>Testis</tissue>
    </source>
</reference>
<gene>
    <name type="primary">Polr2g</name>
</gene>
<feature type="chain" id="PRO_0000073987" description="DNA-directed RNA polymerase II subunit RPB7">
    <location>
        <begin position="1"/>
        <end position="172"/>
    </location>
</feature>
<sequence length="172" mass="19294">MFYHISLEHEILLHPRYFGPNLLNTVKQKLFTEVEGTCTGKYGFVIAVTTIDNIGAGVIQPGRGFVLYPVKYKAIVFRPFKGEVVDAVVTQVNKVGLFTEIGPMSCFISRHSIPSEMEFDPNSNPPCYKTMDEDIVIQQDDEIRLKIVGTRVDKNDIFAIGSLMDDYLGLVS</sequence>
<organism>
    <name type="scientific">Mus musculus</name>
    <name type="common">Mouse</name>
    <dbReference type="NCBI Taxonomy" id="10090"/>
    <lineage>
        <taxon>Eukaryota</taxon>
        <taxon>Metazoa</taxon>
        <taxon>Chordata</taxon>
        <taxon>Craniata</taxon>
        <taxon>Vertebrata</taxon>
        <taxon>Euteleostomi</taxon>
        <taxon>Mammalia</taxon>
        <taxon>Eutheria</taxon>
        <taxon>Euarchontoglires</taxon>
        <taxon>Glires</taxon>
        <taxon>Rodentia</taxon>
        <taxon>Myomorpha</taxon>
        <taxon>Muroidea</taxon>
        <taxon>Muridae</taxon>
        <taxon>Murinae</taxon>
        <taxon>Mus</taxon>
        <taxon>Mus</taxon>
    </lineage>
</organism>
<comment type="function">
    <text evidence="1 2">Core component of RNA polymerase II (Pol II), a DNA-dependent RNA polymerase which synthesizes mRNA precursors and many functional non-coding RNAs using the four ribonucleoside triphosphates as substrates. Pol II is the central component of the basal RNA polymerase II transcription machinery. It is composed of mobile elements that move relative to each other. POLR2G/RPB7 is part of a subcomplex with POLR2D/RPB4 that binds to a pocket formed by POLR2A/RPB1, POLR2B/RPB2 and POLR2F/RPABC2 at the base of the clamp element. The POLR2D/RPB4-POLR2G/RPB7 subcomplex seems to lock the clamp via POLR2G/RPB7 in the closed conformation thus preventing double-stranded DNA to enter the active site cleft. The POLR2D/RPB4-POLR2G/RPB7 subcomplex binds single-stranded DNA and RNA.</text>
</comment>
<comment type="subunit">
    <text evidence="2">Component of the RNA polymerase II (Pol II) core complex consisting of 12 subunits: a ten-subunit catalytic core composed of POLR2A/RPB1, POLR2B/RPB2, POLR2C/RPB3, POLR2I/RPB9, POLR2J/RPB11, POLR2E/RPABC1, POLR2F/RPABC2, POLR2H/RPABC3, POLR2K/RPABC4 and POLR2L/RPABC5 and a mobile stalk composed of two subunits POLR2D/RPB4 and POLR2G/RPB7, protruding from the core and functioning primarily in transcription initiation. Part of Pol II(G) complex, in which Pol II core associates with an additional subunit POLR2M; unlike conventional Pol II, Pol II(G) functions as a transcriptional repressor. Part of TBP-based Pol II pre-initiation complex (PIC), in which Pol II core assembles with general transcription factors and other specific initiation factors including GTF2E1, GTF2E2, GTF2F1, GTF2F2, TCEA1, ERCC2, ERCC3, GTF2H2, GTF2H3, GTF2H4, GTF2H5, GTF2A1, GTF2A2, GTF2B and TBP; this large multi-subunit PIC complex mediates DNA unwinding and targets Pol II core to the transcription start site where the first phosphodiester bond forms.</text>
</comment>
<comment type="subcellular location">
    <subcellularLocation>
        <location evidence="2">Nucleus</location>
    </subcellularLocation>
</comment>
<comment type="similarity">
    <text evidence="3">Belongs to the eukaryotic RPB7/RPC8 RNA polymerase subunit family.</text>
</comment>
<keyword id="KW-0240">DNA-directed RNA polymerase</keyword>
<keyword id="KW-0548">Nucleotidyltransferase</keyword>
<keyword id="KW-0539">Nucleus</keyword>
<keyword id="KW-1185">Reference proteome</keyword>
<keyword id="KW-0694">RNA-binding</keyword>
<keyword id="KW-0804">Transcription</keyword>
<keyword id="KW-0808">Transferase</keyword>
<name>RPB7_MOUSE</name>
<accession>P62488</accession>
<accession>P52433</accession>
<dbReference type="EMBL" id="AK010687">
    <property type="protein sequence ID" value="BAB27119.1"/>
    <property type="molecule type" value="mRNA"/>
</dbReference>
<dbReference type="EMBL" id="AK011627">
    <property type="protein sequence ID" value="BAB27743.1"/>
    <property type="molecule type" value="mRNA"/>
</dbReference>
<dbReference type="EMBL" id="AK013134">
    <property type="protein sequence ID" value="BAB28670.1"/>
    <property type="molecule type" value="mRNA"/>
</dbReference>
<dbReference type="EMBL" id="AK017473">
    <property type="protein sequence ID" value="BAB30760.1"/>
    <property type="molecule type" value="mRNA"/>
</dbReference>
<dbReference type="EMBL" id="BC005580">
    <property type="protein sequence ID" value="AAH05580.3"/>
    <property type="molecule type" value="mRNA"/>
</dbReference>
<dbReference type="EMBL" id="BC055278">
    <property type="protein sequence ID" value="AAH55278.1"/>
    <property type="molecule type" value="mRNA"/>
</dbReference>
<dbReference type="CCDS" id="CCDS29547.1"/>
<dbReference type="RefSeq" id="NP_080605.1">
    <property type="nucleotide sequence ID" value="NM_026329.2"/>
</dbReference>
<dbReference type="SMR" id="P62488"/>
<dbReference type="BioGRID" id="212385">
    <property type="interactions" value="3"/>
</dbReference>
<dbReference type="FunCoup" id="P62488">
    <property type="interactions" value="3030"/>
</dbReference>
<dbReference type="IntAct" id="P62488">
    <property type="interactions" value="1"/>
</dbReference>
<dbReference type="STRING" id="10090.ENSMUSP00000093980"/>
<dbReference type="iPTMnet" id="P62488"/>
<dbReference type="PhosphoSitePlus" id="P62488"/>
<dbReference type="REPRODUCTION-2DPAGE" id="P62488"/>
<dbReference type="PaxDb" id="10090-ENSMUSP00000093980"/>
<dbReference type="PeptideAtlas" id="P62488"/>
<dbReference type="ProteomicsDB" id="260921"/>
<dbReference type="Pumba" id="P62488"/>
<dbReference type="Antibodypedia" id="14963">
    <property type="antibodies" value="224 antibodies from 31 providers"/>
</dbReference>
<dbReference type="DNASU" id="67710"/>
<dbReference type="Ensembl" id="ENSMUST00000096261.5">
    <property type="protein sequence ID" value="ENSMUSP00000093980.4"/>
    <property type="gene ID" value="ENSMUSG00000071662.5"/>
</dbReference>
<dbReference type="GeneID" id="67710"/>
<dbReference type="KEGG" id="mmu:67710"/>
<dbReference type="UCSC" id="uc008gna.1">
    <property type="organism name" value="mouse"/>
</dbReference>
<dbReference type="AGR" id="MGI:1914960"/>
<dbReference type="CTD" id="5436"/>
<dbReference type="MGI" id="MGI:1914960">
    <property type="gene designation" value="Polr2g"/>
</dbReference>
<dbReference type="VEuPathDB" id="HostDB:ENSMUSG00000071662"/>
<dbReference type="eggNOG" id="KOG3298">
    <property type="taxonomic scope" value="Eukaryota"/>
</dbReference>
<dbReference type="GeneTree" id="ENSGT00390000008975"/>
<dbReference type="HOGENOM" id="CLU_085878_2_0_1"/>
<dbReference type="InParanoid" id="P62488"/>
<dbReference type="OMA" id="TMRQPGL"/>
<dbReference type="OrthoDB" id="1162399at2759"/>
<dbReference type="PhylomeDB" id="P62488"/>
<dbReference type="TreeFam" id="TF103042"/>
<dbReference type="Reactome" id="R-MMU-112382">
    <property type="pathway name" value="Formation of RNA Pol II elongation complex"/>
</dbReference>
<dbReference type="Reactome" id="R-MMU-113418">
    <property type="pathway name" value="Formation of the Early Elongation Complex"/>
</dbReference>
<dbReference type="Reactome" id="R-MMU-674695">
    <property type="pathway name" value="RNA Polymerase II Pre-transcription Events"/>
</dbReference>
<dbReference type="Reactome" id="R-MMU-6781823">
    <property type="pathway name" value="Formation of TC-NER Pre-Incision Complex"/>
</dbReference>
<dbReference type="Reactome" id="R-MMU-6782135">
    <property type="pathway name" value="Dual incision in TC-NER"/>
</dbReference>
<dbReference type="Reactome" id="R-MMU-6782210">
    <property type="pathway name" value="Gap-filling DNA repair synthesis and ligation in TC-NER"/>
</dbReference>
<dbReference type="Reactome" id="R-MMU-6796648">
    <property type="pathway name" value="TP53 Regulates Transcription of DNA Repair Genes"/>
</dbReference>
<dbReference type="Reactome" id="R-MMU-6803529">
    <property type="pathway name" value="FGFR2 alternative splicing"/>
</dbReference>
<dbReference type="Reactome" id="R-MMU-6807505">
    <property type="pathway name" value="RNA polymerase II transcribes snRNA genes"/>
</dbReference>
<dbReference type="Reactome" id="R-MMU-72086">
    <property type="pathway name" value="mRNA Capping"/>
</dbReference>
<dbReference type="Reactome" id="R-MMU-72163">
    <property type="pathway name" value="mRNA Splicing - Major Pathway"/>
</dbReference>
<dbReference type="Reactome" id="R-MMU-72165">
    <property type="pathway name" value="mRNA Splicing - Minor Pathway"/>
</dbReference>
<dbReference type="Reactome" id="R-MMU-72203">
    <property type="pathway name" value="Processing of Capped Intron-Containing Pre-mRNA"/>
</dbReference>
<dbReference type="Reactome" id="R-MMU-73776">
    <property type="pathway name" value="RNA Polymerase II Promoter Escape"/>
</dbReference>
<dbReference type="Reactome" id="R-MMU-73779">
    <property type="pathway name" value="RNA Polymerase II Transcription Pre-Initiation And Promoter Opening"/>
</dbReference>
<dbReference type="Reactome" id="R-MMU-75953">
    <property type="pathway name" value="RNA Polymerase II Transcription Initiation"/>
</dbReference>
<dbReference type="Reactome" id="R-MMU-75955">
    <property type="pathway name" value="RNA Polymerase II Transcription Elongation"/>
</dbReference>
<dbReference type="Reactome" id="R-MMU-76042">
    <property type="pathway name" value="RNA Polymerase II Transcription Initiation And Promoter Clearance"/>
</dbReference>
<dbReference type="Reactome" id="R-MMU-77075">
    <property type="pathway name" value="RNA Pol II CTD phosphorylation and interaction with CE"/>
</dbReference>
<dbReference type="Reactome" id="R-MMU-9018519">
    <property type="pathway name" value="Estrogen-dependent gene expression"/>
</dbReference>
<dbReference type="BioGRID-ORCS" id="67710">
    <property type="hits" value="25 hits in 79 CRISPR screens"/>
</dbReference>
<dbReference type="ChiTaRS" id="Polr2g">
    <property type="organism name" value="mouse"/>
</dbReference>
<dbReference type="PRO" id="PR:P62488"/>
<dbReference type="Proteomes" id="UP000000589">
    <property type="component" value="Chromosome 19"/>
</dbReference>
<dbReference type="RNAct" id="P62488">
    <property type="molecule type" value="protein"/>
</dbReference>
<dbReference type="Bgee" id="ENSMUSG00000071662">
    <property type="expression patterns" value="Expressed in medial ganglionic eminence and 274 other cell types or tissues"/>
</dbReference>
<dbReference type="ExpressionAtlas" id="P62488">
    <property type="expression patterns" value="baseline and differential"/>
</dbReference>
<dbReference type="GO" id="GO:0005654">
    <property type="term" value="C:nucleoplasm"/>
    <property type="evidence" value="ECO:0000304"/>
    <property type="project" value="Reactome"/>
</dbReference>
<dbReference type="GO" id="GO:0005634">
    <property type="term" value="C:nucleus"/>
    <property type="evidence" value="ECO:0000250"/>
    <property type="project" value="UniProtKB"/>
</dbReference>
<dbReference type="GO" id="GO:0005665">
    <property type="term" value="C:RNA polymerase II, core complex"/>
    <property type="evidence" value="ECO:0000250"/>
    <property type="project" value="UniProtKB"/>
</dbReference>
<dbReference type="GO" id="GO:0016779">
    <property type="term" value="F:nucleotidyltransferase activity"/>
    <property type="evidence" value="ECO:0007669"/>
    <property type="project" value="UniProtKB-KW"/>
</dbReference>
<dbReference type="GO" id="GO:0003723">
    <property type="term" value="F:RNA binding"/>
    <property type="evidence" value="ECO:0007669"/>
    <property type="project" value="UniProtKB-KW"/>
</dbReference>
<dbReference type="GO" id="GO:0006352">
    <property type="term" value="P:DNA-templated transcription initiation"/>
    <property type="evidence" value="ECO:0007669"/>
    <property type="project" value="InterPro"/>
</dbReference>
<dbReference type="GO" id="GO:0006366">
    <property type="term" value="P:transcription by RNA polymerase II"/>
    <property type="evidence" value="ECO:0000250"/>
    <property type="project" value="UniProtKB"/>
</dbReference>
<dbReference type="CDD" id="cd04329">
    <property type="entry name" value="RNAP_II_Rpb7_N"/>
    <property type="match status" value="1"/>
</dbReference>
<dbReference type="CDD" id="cd04462">
    <property type="entry name" value="S1_RNAPII_Rpb7"/>
    <property type="match status" value="1"/>
</dbReference>
<dbReference type="FunFam" id="2.40.50.140:FF:000043">
    <property type="entry name" value="DNA-directed RNA polymerase II subunit RPB7"/>
    <property type="match status" value="1"/>
</dbReference>
<dbReference type="FunFam" id="3.30.1490.120:FF:000001">
    <property type="entry name" value="DNA-directed RNA polymerase II subunit RPB7"/>
    <property type="match status" value="1"/>
</dbReference>
<dbReference type="Gene3D" id="2.40.50.140">
    <property type="entry name" value="Nucleic acid-binding proteins"/>
    <property type="match status" value="1"/>
</dbReference>
<dbReference type="Gene3D" id="3.30.1490.120">
    <property type="entry name" value="RNA polymerase Rpb7-like, N-terminal domain"/>
    <property type="match status" value="1"/>
</dbReference>
<dbReference type="InterPro" id="IPR012340">
    <property type="entry name" value="NA-bd_OB-fold"/>
</dbReference>
<dbReference type="InterPro" id="IPR036898">
    <property type="entry name" value="RNA_pol_Rpb7-like_N_sf"/>
</dbReference>
<dbReference type="InterPro" id="IPR045113">
    <property type="entry name" value="Rpb7-like"/>
</dbReference>
<dbReference type="InterPro" id="IPR005576">
    <property type="entry name" value="Rpb7-like_N"/>
</dbReference>
<dbReference type="InterPro" id="IPR003029">
    <property type="entry name" value="S1_domain"/>
</dbReference>
<dbReference type="PANTHER" id="PTHR12709:SF4">
    <property type="entry name" value="DNA-DIRECTED RNA POLYMERASE II SUBUNIT RPB7"/>
    <property type="match status" value="1"/>
</dbReference>
<dbReference type="PANTHER" id="PTHR12709">
    <property type="entry name" value="DNA-DIRECTED RNA POLYMERASE II, III"/>
    <property type="match status" value="1"/>
</dbReference>
<dbReference type="Pfam" id="PF00575">
    <property type="entry name" value="S1"/>
    <property type="match status" value="1"/>
</dbReference>
<dbReference type="Pfam" id="PF03876">
    <property type="entry name" value="SHS2_Rpb7-N"/>
    <property type="match status" value="1"/>
</dbReference>
<dbReference type="SMART" id="SM00316">
    <property type="entry name" value="S1"/>
    <property type="match status" value="1"/>
</dbReference>
<dbReference type="SUPFAM" id="SSF88798">
    <property type="entry name" value="N-terminal, heterodimerisation domain of RBP7 (RpoE)"/>
    <property type="match status" value="1"/>
</dbReference>
<dbReference type="SUPFAM" id="SSF50249">
    <property type="entry name" value="Nucleic acid-binding proteins"/>
    <property type="match status" value="1"/>
</dbReference>
<evidence type="ECO:0000250" key="1">
    <source>
        <dbReference type="UniProtKB" id="P34087"/>
    </source>
</evidence>
<evidence type="ECO:0000250" key="2">
    <source>
        <dbReference type="UniProtKB" id="P62487"/>
    </source>
</evidence>
<evidence type="ECO:0000305" key="3"/>
<proteinExistence type="evidence at protein level"/>